<dbReference type="EMBL" id="CP001025">
    <property type="protein sequence ID" value="ACB63284.1"/>
    <property type="molecule type" value="Genomic_DNA"/>
</dbReference>
<dbReference type="RefSeq" id="WP_012363248.1">
    <property type="nucleotide sequence ID" value="NC_010551.1"/>
</dbReference>
<dbReference type="SMR" id="B1YUF7"/>
<dbReference type="KEGG" id="bac:BamMC406_0788"/>
<dbReference type="HOGENOM" id="CLU_049215_2_1_4"/>
<dbReference type="OrthoDB" id="9798772at2"/>
<dbReference type="Proteomes" id="UP000001680">
    <property type="component" value="Chromosome 1"/>
</dbReference>
<dbReference type="GO" id="GO:0005737">
    <property type="term" value="C:cytoplasm"/>
    <property type="evidence" value="ECO:0007669"/>
    <property type="project" value="UniProtKB-SubCell"/>
</dbReference>
<dbReference type="GO" id="GO:0016151">
    <property type="term" value="F:nickel cation binding"/>
    <property type="evidence" value="ECO:0007669"/>
    <property type="project" value="UniProtKB-UniRule"/>
</dbReference>
<dbReference type="Gene3D" id="1.10.4190.10">
    <property type="entry name" value="Urease accessory protein UreF"/>
    <property type="match status" value="1"/>
</dbReference>
<dbReference type="HAMAP" id="MF_01385">
    <property type="entry name" value="UreF"/>
    <property type="match status" value="1"/>
</dbReference>
<dbReference type="InterPro" id="IPR002639">
    <property type="entry name" value="UreF"/>
</dbReference>
<dbReference type="InterPro" id="IPR038277">
    <property type="entry name" value="UreF_sf"/>
</dbReference>
<dbReference type="PANTHER" id="PTHR33620">
    <property type="entry name" value="UREASE ACCESSORY PROTEIN F"/>
    <property type="match status" value="1"/>
</dbReference>
<dbReference type="PANTHER" id="PTHR33620:SF1">
    <property type="entry name" value="UREASE ACCESSORY PROTEIN F"/>
    <property type="match status" value="1"/>
</dbReference>
<dbReference type="Pfam" id="PF01730">
    <property type="entry name" value="UreF"/>
    <property type="match status" value="1"/>
</dbReference>
<dbReference type="PIRSF" id="PIRSF009467">
    <property type="entry name" value="Ureas_acces_UreF"/>
    <property type="match status" value="1"/>
</dbReference>
<reference key="1">
    <citation type="submission" date="2008-04" db="EMBL/GenBank/DDBJ databases">
        <title>Complete sequence of chromosome 1 of Burkholderia ambifaria MC40-6.</title>
        <authorList>
            <person name="Copeland A."/>
            <person name="Lucas S."/>
            <person name="Lapidus A."/>
            <person name="Glavina del Rio T."/>
            <person name="Dalin E."/>
            <person name="Tice H."/>
            <person name="Pitluck S."/>
            <person name="Chain P."/>
            <person name="Malfatti S."/>
            <person name="Shin M."/>
            <person name="Vergez L."/>
            <person name="Lang D."/>
            <person name="Schmutz J."/>
            <person name="Larimer F."/>
            <person name="Land M."/>
            <person name="Hauser L."/>
            <person name="Kyrpides N."/>
            <person name="Lykidis A."/>
            <person name="Ramette A."/>
            <person name="Konstantinidis K."/>
            <person name="Tiedje J."/>
            <person name="Richardson P."/>
        </authorList>
    </citation>
    <scope>NUCLEOTIDE SEQUENCE [LARGE SCALE GENOMIC DNA]</scope>
    <source>
        <strain>MC40-6</strain>
    </source>
</reference>
<gene>
    <name evidence="1" type="primary">ureF</name>
    <name type="ordered locus">BamMC406_0788</name>
</gene>
<name>UREF_BURA4</name>
<accession>B1YUF7</accession>
<keyword id="KW-0143">Chaperone</keyword>
<keyword id="KW-0963">Cytoplasm</keyword>
<keyword id="KW-0996">Nickel insertion</keyword>
<organism>
    <name type="scientific">Burkholderia ambifaria (strain MC40-6)</name>
    <dbReference type="NCBI Taxonomy" id="398577"/>
    <lineage>
        <taxon>Bacteria</taxon>
        <taxon>Pseudomonadati</taxon>
        <taxon>Pseudomonadota</taxon>
        <taxon>Betaproteobacteria</taxon>
        <taxon>Burkholderiales</taxon>
        <taxon>Burkholderiaceae</taxon>
        <taxon>Burkholderia</taxon>
        <taxon>Burkholderia cepacia complex</taxon>
    </lineage>
</organism>
<sequence>MTTTELVALLHLASPALPIGAFSYSQGFEAALDANLIRDADTARDWIASGLTDVLAHGELPFLAHQLARWHAHDADALARENAWFIASRESAELRRETEQMGWSLAQLCTSLEWGDAARRATLATISPIALPTAFTYAAAAHDASADAVLAAYAFGWVENQTSAALKAVPLGQLAGQRIIVALRGAIDAAVRRALATPPDAVNTFAPQLGILSARHETQYSRLFRS</sequence>
<feature type="chain" id="PRO_0000344097" description="Urease accessory protein UreF">
    <location>
        <begin position="1"/>
        <end position="226"/>
    </location>
</feature>
<protein>
    <recommendedName>
        <fullName evidence="1">Urease accessory protein UreF</fullName>
    </recommendedName>
</protein>
<proteinExistence type="inferred from homology"/>
<comment type="function">
    <text evidence="1">Required for maturation of urease via the functional incorporation of the urease nickel metallocenter.</text>
</comment>
<comment type="subunit">
    <text evidence="1">UreD, UreF and UreG form a complex that acts as a GTP-hydrolysis-dependent molecular chaperone, activating the urease apoprotein by helping to assemble the nickel containing metallocenter of UreC. The UreE protein probably delivers the nickel.</text>
</comment>
<comment type="subcellular location">
    <subcellularLocation>
        <location evidence="1">Cytoplasm</location>
    </subcellularLocation>
</comment>
<comment type="similarity">
    <text evidence="1">Belongs to the UreF family.</text>
</comment>
<evidence type="ECO:0000255" key="1">
    <source>
        <dbReference type="HAMAP-Rule" id="MF_01385"/>
    </source>
</evidence>